<protein>
    <recommendedName>
        <fullName evidence="1">DNA repair protein RecO</fullName>
    </recommendedName>
    <alternativeName>
        <fullName evidence="1">Recombination protein O</fullName>
    </alternativeName>
</protein>
<feature type="chain" id="PRO_0000227043" description="DNA repair protein RecO">
    <location>
        <begin position="1"/>
        <end position="272"/>
    </location>
</feature>
<proteinExistence type="inferred from homology"/>
<name>RECO_LATSS</name>
<evidence type="ECO:0000255" key="1">
    <source>
        <dbReference type="HAMAP-Rule" id="MF_00201"/>
    </source>
</evidence>
<organism>
    <name type="scientific">Latilactobacillus sakei subsp. sakei (strain 23K)</name>
    <name type="common">Lactobacillus sakei subsp. sakei</name>
    <dbReference type="NCBI Taxonomy" id="314315"/>
    <lineage>
        <taxon>Bacteria</taxon>
        <taxon>Bacillati</taxon>
        <taxon>Bacillota</taxon>
        <taxon>Bacilli</taxon>
        <taxon>Lactobacillales</taxon>
        <taxon>Lactobacillaceae</taxon>
        <taxon>Latilactobacillus</taxon>
    </lineage>
</organism>
<comment type="function">
    <text evidence="1">Involved in DNA repair and RecF pathway recombination.</text>
</comment>
<comment type="similarity">
    <text evidence="1">Belongs to the RecO family.</text>
</comment>
<gene>
    <name evidence="1" type="primary">recO</name>
    <name type="ordered locus">LCA_0879</name>
</gene>
<reference key="1">
    <citation type="journal article" date="2005" name="Nat. Biotechnol.">
        <title>The complete genome sequence of the meat-borne lactic acid bacterium Lactobacillus sakei 23K.</title>
        <authorList>
            <person name="Chaillou S."/>
            <person name="Champomier-Verges M.-C."/>
            <person name="Cornet M."/>
            <person name="Crutz-Le Coq A.-M."/>
            <person name="Dudez A.-M."/>
            <person name="Martin V."/>
            <person name="Beaufils S."/>
            <person name="Darbon-Rongere E."/>
            <person name="Bossy R."/>
            <person name="Loux V."/>
            <person name="Zagorec M."/>
        </authorList>
    </citation>
    <scope>NUCLEOTIDE SEQUENCE [LARGE SCALE GENOMIC DNA]</scope>
    <source>
        <strain>23K</strain>
    </source>
</reference>
<sequence length="272" mass="31361">MAEHRFEDFNGLVMYRKNYKEKDMLVKILTDRFGKKMFYLRGANKPKFRLSAAILPFTQAEYGGDIRDDGLSFLNNVKSATQFQTISQDLFLNAYATYILNLIDVGFPDSEPLGIWYDKVEQALNLIDEGFDAAMITHIIEIQLLQVFGVQPQLQGCAVCGRTDLAFDYSESYGGLLCQRHWHLDPNRFHSSQRAIYYLRLFSVIDLFKIQSVNVKEATQVELKMIIDRLYQDTVGLSLKSKQFIDKMYSFDSQLPQLKKVPSEIDSTPKDD</sequence>
<accession>Q38XA1</accession>
<keyword id="KW-0227">DNA damage</keyword>
<keyword id="KW-0233">DNA recombination</keyword>
<keyword id="KW-0234">DNA repair</keyword>
<keyword id="KW-1185">Reference proteome</keyword>
<dbReference type="EMBL" id="CR936503">
    <property type="protein sequence ID" value="CAI55180.1"/>
    <property type="molecule type" value="Genomic_DNA"/>
</dbReference>
<dbReference type="RefSeq" id="WP_011374581.1">
    <property type="nucleotide sequence ID" value="NC_007576.1"/>
</dbReference>
<dbReference type="SMR" id="Q38XA1"/>
<dbReference type="STRING" id="314315.LCA_0879"/>
<dbReference type="GeneID" id="57133736"/>
<dbReference type="KEGG" id="lsa:LCA_0879"/>
<dbReference type="eggNOG" id="COG1381">
    <property type="taxonomic scope" value="Bacteria"/>
</dbReference>
<dbReference type="HOGENOM" id="CLU_066632_4_0_9"/>
<dbReference type="OrthoDB" id="9797083at2"/>
<dbReference type="Proteomes" id="UP000002707">
    <property type="component" value="Chromosome"/>
</dbReference>
<dbReference type="GO" id="GO:0043590">
    <property type="term" value="C:bacterial nucleoid"/>
    <property type="evidence" value="ECO:0007669"/>
    <property type="project" value="TreeGrafter"/>
</dbReference>
<dbReference type="GO" id="GO:0006310">
    <property type="term" value="P:DNA recombination"/>
    <property type="evidence" value="ECO:0007669"/>
    <property type="project" value="UniProtKB-UniRule"/>
</dbReference>
<dbReference type="GO" id="GO:0006302">
    <property type="term" value="P:double-strand break repair"/>
    <property type="evidence" value="ECO:0007669"/>
    <property type="project" value="TreeGrafter"/>
</dbReference>
<dbReference type="Gene3D" id="2.40.50.140">
    <property type="entry name" value="Nucleic acid-binding proteins"/>
    <property type="match status" value="1"/>
</dbReference>
<dbReference type="Gene3D" id="1.20.1440.120">
    <property type="entry name" value="Recombination protein O, C-terminal domain"/>
    <property type="match status" value="1"/>
</dbReference>
<dbReference type="HAMAP" id="MF_00201">
    <property type="entry name" value="RecO"/>
    <property type="match status" value="1"/>
</dbReference>
<dbReference type="InterPro" id="IPR037278">
    <property type="entry name" value="ARFGAP/RecO"/>
</dbReference>
<dbReference type="InterPro" id="IPR022572">
    <property type="entry name" value="DNA_rep/recomb_RecO_N"/>
</dbReference>
<dbReference type="InterPro" id="IPR012340">
    <property type="entry name" value="NA-bd_OB-fold"/>
</dbReference>
<dbReference type="InterPro" id="IPR003717">
    <property type="entry name" value="RecO"/>
</dbReference>
<dbReference type="InterPro" id="IPR042242">
    <property type="entry name" value="RecO_C"/>
</dbReference>
<dbReference type="NCBIfam" id="TIGR00613">
    <property type="entry name" value="reco"/>
    <property type="match status" value="1"/>
</dbReference>
<dbReference type="PANTHER" id="PTHR33991">
    <property type="entry name" value="DNA REPAIR PROTEIN RECO"/>
    <property type="match status" value="1"/>
</dbReference>
<dbReference type="PANTHER" id="PTHR33991:SF1">
    <property type="entry name" value="DNA REPAIR PROTEIN RECO"/>
    <property type="match status" value="1"/>
</dbReference>
<dbReference type="Pfam" id="PF02565">
    <property type="entry name" value="RecO_C"/>
    <property type="match status" value="1"/>
</dbReference>
<dbReference type="Pfam" id="PF11967">
    <property type="entry name" value="RecO_N"/>
    <property type="match status" value="1"/>
</dbReference>
<dbReference type="SUPFAM" id="SSF57863">
    <property type="entry name" value="ArfGap/RecO-like zinc finger"/>
    <property type="match status" value="1"/>
</dbReference>
<dbReference type="SUPFAM" id="SSF50249">
    <property type="entry name" value="Nucleic acid-binding proteins"/>
    <property type="match status" value="1"/>
</dbReference>